<dbReference type="EMBL" id="CP000611">
    <property type="protein sequence ID" value="ABQ73400.1"/>
    <property type="molecule type" value="Genomic_DNA"/>
</dbReference>
<dbReference type="RefSeq" id="WP_003408108.1">
    <property type="nucleotide sequence ID" value="NZ_CP016972.1"/>
</dbReference>
<dbReference type="PDB" id="7F0D">
    <property type="method" value="EM"/>
    <property type="resolution" value="3.30 A"/>
    <property type="chains" value="Q=1-129"/>
</dbReference>
<dbReference type="PDBsum" id="7F0D"/>
<dbReference type="SMR" id="A5U300"/>
<dbReference type="GeneID" id="45425613"/>
<dbReference type="KEGG" id="mra:MRA_1654"/>
<dbReference type="eggNOG" id="COG0292">
    <property type="taxonomic scope" value="Bacteria"/>
</dbReference>
<dbReference type="HOGENOM" id="CLU_123265_0_0_11"/>
<dbReference type="Proteomes" id="UP000001988">
    <property type="component" value="Chromosome"/>
</dbReference>
<dbReference type="GO" id="GO:1990904">
    <property type="term" value="C:ribonucleoprotein complex"/>
    <property type="evidence" value="ECO:0007669"/>
    <property type="project" value="UniProtKB-KW"/>
</dbReference>
<dbReference type="GO" id="GO:0005840">
    <property type="term" value="C:ribosome"/>
    <property type="evidence" value="ECO:0007669"/>
    <property type="project" value="UniProtKB-KW"/>
</dbReference>
<dbReference type="GO" id="GO:0019843">
    <property type="term" value="F:rRNA binding"/>
    <property type="evidence" value="ECO:0007669"/>
    <property type="project" value="UniProtKB-UniRule"/>
</dbReference>
<dbReference type="GO" id="GO:0003735">
    <property type="term" value="F:structural constituent of ribosome"/>
    <property type="evidence" value="ECO:0007669"/>
    <property type="project" value="InterPro"/>
</dbReference>
<dbReference type="GO" id="GO:0000027">
    <property type="term" value="P:ribosomal large subunit assembly"/>
    <property type="evidence" value="ECO:0007669"/>
    <property type="project" value="UniProtKB-UniRule"/>
</dbReference>
<dbReference type="GO" id="GO:0006412">
    <property type="term" value="P:translation"/>
    <property type="evidence" value="ECO:0007669"/>
    <property type="project" value="InterPro"/>
</dbReference>
<dbReference type="CDD" id="cd07026">
    <property type="entry name" value="Ribosomal_L20"/>
    <property type="match status" value="1"/>
</dbReference>
<dbReference type="FunFam" id="1.10.1900.20:FF:000001">
    <property type="entry name" value="50S ribosomal protein L20"/>
    <property type="match status" value="1"/>
</dbReference>
<dbReference type="Gene3D" id="6.10.160.10">
    <property type="match status" value="1"/>
</dbReference>
<dbReference type="Gene3D" id="1.10.1900.20">
    <property type="entry name" value="Ribosomal protein L20"/>
    <property type="match status" value="1"/>
</dbReference>
<dbReference type="HAMAP" id="MF_00382">
    <property type="entry name" value="Ribosomal_bL20"/>
    <property type="match status" value="1"/>
</dbReference>
<dbReference type="InterPro" id="IPR005813">
    <property type="entry name" value="Ribosomal_bL20"/>
</dbReference>
<dbReference type="InterPro" id="IPR049946">
    <property type="entry name" value="RIBOSOMAL_L20_CS"/>
</dbReference>
<dbReference type="InterPro" id="IPR035566">
    <property type="entry name" value="Ribosomal_protein_bL20_C"/>
</dbReference>
<dbReference type="NCBIfam" id="TIGR01032">
    <property type="entry name" value="rplT_bact"/>
    <property type="match status" value="1"/>
</dbReference>
<dbReference type="PANTHER" id="PTHR10986">
    <property type="entry name" value="39S RIBOSOMAL PROTEIN L20"/>
    <property type="match status" value="1"/>
</dbReference>
<dbReference type="Pfam" id="PF00453">
    <property type="entry name" value="Ribosomal_L20"/>
    <property type="match status" value="1"/>
</dbReference>
<dbReference type="PRINTS" id="PR00062">
    <property type="entry name" value="RIBOSOMALL20"/>
</dbReference>
<dbReference type="SUPFAM" id="SSF74731">
    <property type="entry name" value="Ribosomal protein L20"/>
    <property type="match status" value="1"/>
</dbReference>
<dbReference type="PROSITE" id="PS00937">
    <property type="entry name" value="RIBOSOMAL_L20"/>
    <property type="match status" value="1"/>
</dbReference>
<organism>
    <name type="scientific">Mycobacterium tuberculosis (strain ATCC 25177 / H37Ra)</name>
    <dbReference type="NCBI Taxonomy" id="419947"/>
    <lineage>
        <taxon>Bacteria</taxon>
        <taxon>Bacillati</taxon>
        <taxon>Actinomycetota</taxon>
        <taxon>Actinomycetes</taxon>
        <taxon>Mycobacteriales</taxon>
        <taxon>Mycobacteriaceae</taxon>
        <taxon>Mycobacterium</taxon>
        <taxon>Mycobacterium tuberculosis complex</taxon>
    </lineage>
</organism>
<sequence length="129" mass="14527">MARVKRAVNAHKKRRSILKASRGYRGQRSRLYRKAKEQQLHSLNYAYRDRRARKGEFRKLWIARINAAARLNDITYNRLIQGLKAAGVEVDRKNLADIAISDPAAFTALVDVARAALPEDVNAPSGEAA</sequence>
<protein>
    <recommendedName>
        <fullName evidence="1">Large ribosomal subunit protein bL20</fullName>
    </recommendedName>
    <alternativeName>
        <fullName evidence="2">50S ribosomal protein L20</fullName>
    </alternativeName>
</protein>
<keyword id="KW-0002">3D-structure</keyword>
<keyword id="KW-1185">Reference proteome</keyword>
<keyword id="KW-0687">Ribonucleoprotein</keyword>
<keyword id="KW-0689">Ribosomal protein</keyword>
<keyword id="KW-0694">RNA-binding</keyword>
<keyword id="KW-0699">rRNA-binding</keyword>
<reference key="1">
    <citation type="journal article" date="2008" name="PLoS ONE">
        <title>Genetic basis of virulence attenuation revealed by comparative genomic analysis of Mycobacterium tuberculosis strain H37Ra versus H37Rv.</title>
        <authorList>
            <person name="Zheng H."/>
            <person name="Lu L."/>
            <person name="Wang B."/>
            <person name="Pu S."/>
            <person name="Zhang X."/>
            <person name="Zhu G."/>
            <person name="Shi W."/>
            <person name="Zhang L."/>
            <person name="Wang H."/>
            <person name="Wang S."/>
            <person name="Zhao G."/>
            <person name="Zhang Y."/>
        </authorList>
    </citation>
    <scope>NUCLEOTIDE SEQUENCE [LARGE SCALE GENOMIC DNA]</scope>
    <source>
        <strain>ATCC 25177 / H37Ra</strain>
    </source>
</reference>
<name>RL20_MYCTA</name>
<comment type="function">
    <text evidence="1">Binds directly to 23S ribosomal RNA and is necessary for the in vitro assembly process of the 50S ribosomal subunit. It is not involved in the protein synthesizing functions of that subunit.</text>
</comment>
<comment type="similarity">
    <text evidence="1">Belongs to the bacterial ribosomal protein bL20 family.</text>
</comment>
<accession>A5U300</accession>
<evidence type="ECO:0000255" key="1">
    <source>
        <dbReference type="HAMAP-Rule" id="MF_00382"/>
    </source>
</evidence>
<evidence type="ECO:0000305" key="2"/>
<evidence type="ECO:0007829" key="3">
    <source>
        <dbReference type="PDB" id="7F0D"/>
    </source>
</evidence>
<proteinExistence type="evidence at protein level"/>
<feature type="chain" id="PRO_1000049016" description="Large ribosomal subunit protein bL20">
    <location>
        <begin position="1"/>
        <end position="129"/>
    </location>
</feature>
<feature type="helix" evidence="3">
    <location>
        <begin position="7"/>
        <end position="19"/>
    </location>
</feature>
<feature type="turn" evidence="3">
    <location>
        <begin position="25"/>
        <end position="28"/>
    </location>
</feature>
<feature type="helix" evidence="3">
    <location>
        <begin position="32"/>
        <end position="71"/>
    </location>
</feature>
<feature type="helix" evidence="3">
    <location>
        <begin position="76"/>
        <end position="85"/>
    </location>
</feature>
<feature type="helix" evidence="3">
    <location>
        <begin position="92"/>
        <end position="101"/>
    </location>
</feature>
<feature type="helix" evidence="3">
    <location>
        <begin position="103"/>
        <end position="115"/>
    </location>
</feature>
<feature type="strand" evidence="3">
    <location>
        <begin position="119"/>
        <end position="121"/>
    </location>
</feature>
<gene>
    <name evidence="1" type="primary">rplT</name>
    <name type="ordered locus">MRA_1654</name>
</gene>